<reference key="1">
    <citation type="submission" date="2007-09" db="EMBL/GenBank/DDBJ databases">
        <title>Complete genome sequence of Rickettsia akari.</title>
        <authorList>
            <person name="Madan A."/>
            <person name="Fahey J."/>
            <person name="Helton E."/>
            <person name="Ketteman M."/>
            <person name="Madan A."/>
            <person name="Rodrigues S."/>
            <person name="Sanchez A."/>
            <person name="Whiting M."/>
            <person name="Dasch G."/>
            <person name="Eremeeva M."/>
        </authorList>
    </citation>
    <scope>NUCLEOTIDE SEQUENCE [LARGE SCALE GENOMIC DNA]</scope>
    <source>
        <strain>Hartford</strain>
    </source>
</reference>
<feature type="chain" id="PRO_1000007587" description="Large ribosomal subunit protein uL29">
    <location>
        <begin position="1"/>
        <end position="71"/>
    </location>
</feature>
<name>RL29_RICAH</name>
<gene>
    <name evidence="1" type="primary">rpmC</name>
    <name type="ordered locus">A1C_05065</name>
</gene>
<protein>
    <recommendedName>
        <fullName evidence="1">Large ribosomal subunit protein uL29</fullName>
    </recommendedName>
    <alternativeName>
        <fullName evidence="2">50S ribosomal protein L29</fullName>
    </alternativeName>
</protein>
<evidence type="ECO:0000255" key="1">
    <source>
        <dbReference type="HAMAP-Rule" id="MF_00374"/>
    </source>
</evidence>
<evidence type="ECO:0000305" key="2"/>
<comment type="similarity">
    <text evidence="1">Belongs to the universal ribosomal protein uL29 family.</text>
</comment>
<sequence>MNDLKLLRSKLSTDTIEELYKNLNLLKKELFNLRFQQALGELKNTSRFSLVKKSIARIKTELTKRSNSEEY</sequence>
<organism>
    <name type="scientific">Rickettsia akari (strain Hartford)</name>
    <dbReference type="NCBI Taxonomy" id="293614"/>
    <lineage>
        <taxon>Bacteria</taxon>
        <taxon>Pseudomonadati</taxon>
        <taxon>Pseudomonadota</taxon>
        <taxon>Alphaproteobacteria</taxon>
        <taxon>Rickettsiales</taxon>
        <taxon>Rickettsiaceae</taxon>
        <taxon>Rickettsieae</taxon>
        <taxon>Rickettsia</taxon>
        <taxon>spotted fever group</taxon>
    </lineage>
</organism>
<accession>A8GPE2</accession>
<proteinExistence type="inferred from homology"/>
<dbReference type="EMBL" id="CP000847">
    <property type="protein sequence ID" value="ABV75267.1"/>
    <property type="molecule type" value="Genomic_DNA"/>
</dbReference>
<dbReference type="RefSeq" id="WP_012149897.1">
    <property type="nucleotide sequence ID" value="NC_009881.1"/>
</dbReference>
<dbReference type="SMR" id="A8GPE2"/>
<dbReference type="STRING" id="293614.A1C_05065"/>
<dbReference type="KEGG" id="rak:A1C_05065"/>
<dbReference type="eggNOG" id="COG0255">
    <property type="taxonomic scope" value="Bacteria"/>
</dbReference>
<dbReference type="HOGENOM" id="CLU_158491_1_0_5"/>
<dbReference type="Proteomes" id="UP000006830">
    <property type="component" value="Chromosome"/>
</dbReference>
<dbReference type="GO" id="GO:0022625">
    <property type="term" value="C:cytosolic large ribosomal subunit"/>
    <property type="evidence" value="ECO:0007669"/>
    <property type="project" value="TreeGrafter"/>
</dbReference>
<dbReference type="GO" id="GO:0003735">
    <property type="term" value="F:structural constituent of ribosome"/>
    <property type="evidence" value="ECO:0007669"/>
    <property type="project" value="InterPro"/>
</dbReference>
<dbReference type="GO" id="GO:0006412">
    <property type="term" value="P:translation"/>
    <property type="evidence" value="ECO:0007669"/>
    <property type="project" value="UniProtKB-UniRule"/>
</dbReference>
<dbReference type="CDD" id="cd00427">
    <property type="entry name" value="Ribosomal_L29_HIP"/>
    <property type="match status" value="1"/>
</dbReference>
<dbReference type="FunFam" id="1.10.287.310:FF:000001">
    <property type="entry name" value="50S ribosomal protein L29"/>
    <property type="match status" value="1"/>
</dbReference>
<dbReference type="Gene3D" id="1.10.287.310">
    <property type="match status" value="1"/>
</dbReference>
<dbReference type="HAMAP" id="MF_00374">
    <property type="entry name" value="Ribosomal_uL29"/>
    <property type="match status" value="1"/>
</dbReference>
<dbReference type="InterPro" id="IPR050063">
    <property type="entry name" value="Ribosomal_protein_uL29"/>
</dbReference>
<dbReference type="InterPro" id="IPR001854">
    <property type="entry name" value="Ribosomal_uL29"/>
</dbReference>
<dbReference type="InterPro" id="IPR018254">
    <property type="entry name" value="Ribosomal_uL29_CS"/>
</dbReference>
<dbReference type="InterPro" id="IPR036049">
    <property type="entry name" value="Ribosomal_uL29_sf"/>
</dbReference>
<dbReference type="NCBIfam" id="TIGR00012">
    <property type="entry name" value="L29"/>
    <property type="match status" value="1"/>
</dbReference>
<dbReference type="PANTHER" id="PTHR10916">
    <property type="entry name" value="60S RIBOSOMAL PROTEIN L35/50S RIBOSOMAL PROTEIN L29"/>
    <property type="match status" value="1"/>
</dbReference>
<dbReference type="PANTHER" id="PTHR10916:SF0">
    <property type="entry name" value="LARGE RIBOSOMAL SUBUNIT PROTEIN UL29C"/>
    <property type="match status" value="1"/>
</dbReference>
<dbReference type="Pfam" id="PF00831">
    <property type="entry name" value="Ribosomal_L29"/>
    <property type="match status" value="1"/>
</dbReference>
<dbReference type="SUPFAM" id="SSF46561">
    <property type="entry name" value="Ribosomal protein L29 (L29p)"/>
    <property type="match status" value="1"/>
</dbReference>
<dbReference type="PROSITE" id="PS00579">
    <property type="entry name" value="RIBOSOMAL_L29"/>
    <property type="match status" value="1"/>
</dbReference>
<keyword id="KW-0687">Ribonucleoprotein</keyword>
<keyword id="KW-0689">Ribosomal protein</keyword>